<feature type="chain" id="PRO_1000048431" description="Light-independent protochlorophyllide reductase subunit B">
    <location>
        <begin position="1"/>
        <end position="524"/>
    </location>
</feature>
<feature type="active site" description="Proton donor" evidence="1">
    <location>
        <position position="290"/>
    </location>
</feature>
<feature type="binding site" evidence="1">
    <location>
        <position position="36"/>
    </location>
    <ligand>
        <name>[4Fe-4S] cluster</name>
        <dbReference type="ChEBI" id="CHEBI:49883"/>
        <note>ligand shared with heterodimeric partner</note>
    </ligand>
</feature>
<feature type="binding site" evidence="1">
    <location>
        <begin position="425"/>
        <end position="426"/>
    </location>
    <ligand>
        <name>substrate</name>
    </ligand>
</feature>
<sequence length="524" mass="57730">MQLTLWTYEGPPHVGAMRIAASMRGVHYVLHAPQGDTYADLLFTMIERRGQRPPVTYTTFQARDLGGDTAELVKRHVREAVDRFQPDALLVGESCTAELIQDQPGALAQGMGLTMPVVSLELPAYSKKENWGAAETFYQMVRNLLKEQTPANNQHDPMTWQHQGRRPRVNLLGPSLLGFRCRDDVLEVQKLLTLHGIDVGVVAPLGAGVEDLKRIPDADLNVCLYPEVAESSCSWLERNFGMPFSRTVPIGVGATHDFLVEVHDMLGMEPPAPDEGYRRSRLPWYSESVDSTYLTGKRVFIFGDGSHALAAARICSEELGFTVVGLGTYSREMARPVRAAAKALGLEALISDDYLAVEAAMAKAAPELVLGTQMERHSAKRLGIPCAVISTPMHVQDVPARMSPQMGWEGANVIFDDWVHPLMMGLEEHLIGMFRHDFEFVDGHQSHLGHTGGAGAADHSALTDIPADGDDALHWTADGEAELKKIPFFVRGKVRRNTEAYARDVGCRVINSETLYDAKAHFKA</sequence>
<protein>
    <recommendedName>
        <fullName evidence="1">Light-independent protochlorophyllide reductase subunit B</fullName>
        <shortName evidence="1">DPOR subunit B</shortName>
        <shortName evidence="1">LI-POR subunit B</shortName>
        <ecNumber evidence="1">1.3.7.7</ecNumber>
    </recommendedName>
</protein>
<comment type="function">
    <text evidence="1">Component of the dark-operative protochlorophyllide reductase (DPOR) that uses Mg-ATP and reduced ferredoxin to reduce ring D of protochlorophyllide (Pchlide) to form chlorophyllide a (Chlide). This reaction is light-independent. The NB-protein (ChlN-ChlB) is the catalytic component of the complex.</text>
</comment>
<comment type="catalytic activity">
    <reaction evidence="1">
        <text>chlorophyllide a + oxidized 2[4Fe-4S]-[ferredoxin] + 2 ADP + 2 phosphate = protochlorophyllide a + reduced 2[4Fe-4S]-[ferredoxin] + 2 ATP + 2 H2O</text>
        <dbReference type="Rhea" id="RHEA:28202"/>
        <dbReference type="Rhea" id="RHEA-COMP:10002"/>
        <dbReference type="Rhea" id="RHEA-COMP:10004"/>
        <dbReference type="ChEBI" id="CHEBI:15377"/>
        <dbReference type="ChEBI" id="CHEBI:30616"/>
        <dbReference type="ChEBI" id="CHEBI:33722"/>
        <dbReference type="ChEBI" id="CHEBI:33723"/>
        <dbReference type="ChEBI" id="CHEBI:43474"/>
        <dbReference type="ChEBI" id="CHEBI:83348"/>
        <dbReference type="ChEBI" id="CHEBI:83350"/>
        <dbReference type="ChEBI" id="CHEBI:456216"/>
        <dbReference type="EC" id="1.3.7.7"/>
    </reaction>
</comment>
<comment type="cofactor">
    <cofactor evidence="1">
        <name>[4Fe-4S] cluster</name>
        <dbReference type="ChEBI" id="CHEBI:49883"/>
    </cofactor>
    <text evidence="1">Binds 1 [4Fe-4S] cluster per heterodimer. The cluster is bound at the heterodimer interface by residues from both subunits.</text>
</comment>
<comment type="pathway">
    <text evidence="1">Porphyrin-containing compound metabolism; chlorophyll biosynthesis (light-independent).</text>
</comment>
<comment type="subunit">
    <text evidence="1">Protochlorophyllide reductase is composed of three subunits; ChlL, ChlN and ChlB. Forms a heterotetramer of two ChlB and two ChlN subunits.</text>
</comment>
<comment type="similarity">
    <text evidence="1">Belongs to the ChlB/BchB/BchZ family.</text>
</comment>
<evidence type="ECO:0000255" key="1">
    <source>
        <dbReference type="HAMAP-Rule" id="MF_00353"/>
    </source>
</evidence>
<name>CHLB_SYNSC</name>
<keyword id="KW-0004">4Fe-4S</keyword>
<keyword id="KW-0067">ATP-binding</keyword>
<keyword id="KW-0149">Chlorophyll biosynthesis</keyword>
<keyword id="KW-0408">Iron</keyword>
<keyword id="KW-0411">Iron-sulfur</keyword>
<keyword id="KW-0479">Metal-binding</keyword>
<keyword id="KW-0547">Nucleotide-binding</keyword>
<keyword id="KW-0560">Oxidoreductase</keyword>
<keyword id="KW-0602">Photosynthesis</keyword>
<dbReference type="EC" id="1.3.7.7" evidence="1"/>
<dbReference type="EMBL" id="CP000110">
    <property type="protein sequence ID" value="ABB34515.1"/>
    <property type="molecule type" value="Genomic_DNA"/>
</dbReference>
<dbReference type="RefSeq" id="WP_011363742.1">
    <property type="nucleotide sequence ID" value="NC_007516.1"/>
</dbReference>
<dbReference type="SMR" id="Q3ALL7"/>
<dbReference type="STRING" id="110662.Syncc9605_0746"/>
<dbReference type="KEGG" id="syd:Syncc9605_0746"/>
<dbReference type="eggNOG" id="COG2710">
    <property type="taxonomic scope" value="Bacteria"/>
</dbReference>
<dbReference type="HOGENOM" id="CLU_025470_0_0_3"/>
<dbReference type="OrthoDB" id="5717231at2"/>
<dbReference type="UniPathway" id="UPA00670"/>
<dbReference type="GO" id="GO:0051539">
    <property type="term" value="F:4 iron, 4 sulfur cluster binding"/>
    <property type="evidence" value="ECO:0007669"/>
    <property type="project" value="UniProtKB-UniRule"/>
</dbReference>
<dbReference type="GO" id="GO:0005524">
    <property type="term" value="F:ATP binding"/>
    <property type="evidence" value="ECO:0007669"/>
    <property type="project" value="UniProtKB-UniRule"/>
</dbReference>
<dbReference type="GO" id="GO:0046872">
    <property type="term" value="F:metal ion binding"/>
    <property type="evidence" value="ECO:0007669"/>
    <property type="project" value="UniProtKB-KW"/>
</dbReference>
<dbReference type="GO" id="GO:0016730">
    <property type="term" value="F:oxidoreductase activity, acting on iron-sulfur proteins as donors"/>
    <property type="evidence" value="ECO:0007669"/>
    <property type="project" value="InterPro"/>
</dbReference>
<dbReference type="GO" id="GO:0016636">
    <property type="term" value="F:oxidoreductase activity, acting on the CH-CH group of donors, iron-sulfur protein as acceptor"/>
    <property type="evidence" value="ECO:0007669"/>
    <property type="project" value="UniProtKB-UniRule"/>
</dbReference>
<dbReference type="GO" id="GO:0036068">
    <property type="term" value="P:light-independent chlorophyll biosynthetic process"/>
    <property type="evidence" value="ECO:0007669"/>
    <property type="project" value="UniProtKB-UniRule"/>
</dbReference>
<dbReference type="GO" id="GO:0019685">
    <property type="term" value="P:photosynthesis, dark reaction"/>
    <property type="evidence" value="ECO:0007669"/>
    <property type="project" value="InterPro"/>
</dbReference>
<dbReference type="Gene3D" id="1.20.89.20">
    <property type="match status" value="1"/>
</dbReference>
<dbReference type="Gene3D" id="3.40.50.1980">
    <property type="entry name" value="Nitrogenase molybdenum iron protein domain"/>
    <property type="match status" value="3"/>
</dbReference>
<dbReference type="Gene3D" id="1.10.8.550">
    <property type="entry name" value="Proto-chlorophyllide reductase 57 kD subunit B"/>
    <property type="match status" value="1"/>
</dbReference>
<dbReference type="HAMAP" id="MF_00353">
    <property type="entry name" value="ChlB_BchB"/>
    <property type="match status" value="1"/>
</dbReference>
<dbReference type="InterPro" id="IPR050152">
    <property type="entry name" value="ChlB/BchB/BchZ"/>
</dbReference>
<dbReference type="InterPro" id="IPR013580">
    <property type="entry name" value="LI-POR_suB-like_C"/>
</dbReference>
<dbReference type="InterPro" id="IPR000510">
    <property type="entry name" value="Nase/OxRdtase_comp1"/>
</dbReference>
<dbReference type="InterPro" id="IPR042298">
    <property type="entry name" value="P-CP_red_C"/>
</dbReference>
<dbReference type="InterPro" id="IPR005969">
    <property type="entry name" value="Protochl_reductB"/>
</dbReference>
<dbReference type="InterPro" id="IPR016209">
    <property type="entry name" value="Protochlorophyllide_Rdtase"/>
</dbReference>
<dbReference type="NCBIfam" id="TIGR01278">
    <property type="entry name" value="DPOR_BchB"/>
    <property type="match status" value="1"/>
</dbReference>
<dbReference type="NCBIfam" id="NF002790">
    <property type="entry name" value="PRK02910.1-4"/>
    <property type="match status" value="1"/>
</dbReference>
<dbReference type="PANTHER" id="PTHR33712">
    <property type="entry name" value="LIGHT-INDEPENDENT PROTOCHLOROPHYLLIDE REDUCTASE SUBUNIT B"/>
    <property type="match status" value="1"/>
</dbReference>
<dbReference type="PANTHER" id="PTHR33712:SF7">
    <property type="entry name" value="LIGHT-INDEPENDENT PROTOCHLOROPHYLLIDE REDUCTASE SUBUNIT B"/>
    <property type="match status" value="1"/>
</dbReference>
<dbReference type="Pfam" id="PF00148">
    <property type="entry name" value="Oxidored_nitro"/>
    <property type="match status" value="1"/>
</dbReference>
<dbReference type="Pfam" id="PF08369">
    <property type="entry name" value="PCP_red"/>
    <property type="match status" value="1"/>
</dbReference>
<dbReference type="PIRSF" id="PIRSF000163">
    <property type="entry name" value="PCP_ChlB"/>
    <property type="match status" value="1"/>
</dbReference>
<dbReference type="SUPFAM" id="SSF53807">
    <property type="entry name" value="Helical backbone' metal receptor"/>
    <property type="match status" value="1"/>
</dbReference>
<reference key="1">
    <citation type="submission" date="2005-07" db="EMBL/GenBank/DDBJ databases">
        <title>Complete sequence of Synechococcus sp. CC9605.</title>
        <authorList>
            <consortium name="US DOE Joint Genome Institute"/>
            <person name="Copeland A."/>
            <person name="Lucas S."/>
            <person name="Lapidus A."/>
            <person name="Barry K."/>
            <person name="Detter J.C."/>
            <person name="Glavina T."/>
            <person name="Hammon N."/>
            <person name="Israni S."/>
            <person name="Pitluck S."/>
            <person name="Schmutz J."/>
            <person name="Martinez M."/>
            <person name="Larimer F."/>
            <person name="Land M."/>
            <person name="Kyrpides N."/>
            <person name="Ivanova N."/>
            <person name="Richardson P."/>
        </authorList>
    </citation>
    <scope>NUCLEOTIDE SEQUENCE [LARGE SCALE GENOMIC DNA]</scope>
    <source>
        <strain>CC9605</strain>
    </source>
</reference>
<proteinExistence type="inferred from homology"/>
<accession>Q3ALL7</accession>
<organism>
    <name type="scientific">Synechococcus sp. (strain CC9605)</name>
    <dbReference type="NCBI Taxonomy" id="110662"/>
    <lineage>
        <taxon>Bacteria</taxon>
        <taxon>Bacillati</taxon>
        <taxon>Cyanobacteriota</taxon>
        <taxon>Cyanophyceae</taxon>
        <taxon>Synechococcales</taxon>
        <taxon>Synechococcaceae</taxon>
        <taxon>Synechococcus</taxon>
    </lineage>
</organism>
<gene>
    <name evidence="1" type="primary">chlB</name>
    <name type="ordered locus">Syncc9605_0746</name>
</gene>